<dbReference type="EC" id="2.1.1.-" evidence="1"/>
<dbReference type="EMBL" id="AE005672">
    <property type="protein sequence ID" value="AAK75389.1"/>
    <property type="molecule type" value="Genomic_DNA"/>
</dbReference>
<dbReference type="PIR" id="D95149">
    <property type="entry name" value="D95149"/>
</dbReference>
<dbReference type="RefSeq" id="WP_000802934.1">
    <property type="nucleotide sequence ID" value="NZ_CP155539.1"/>
</dbReference>
<dbReference type="SMR" id="Q97QD4"/>
<dbReference type="IntAct" id="Q97QD4">
    <property type="interactions" value="1"/>
</dbReference>
<dbReference type="PaxDb" id="170187-SP_1285"/>
<dbReference type="EnsemblBacteria" id="AAK75389">
    <property type="protein sequence ID" value="AAK75389"/>
    <property type="gene ID" value="SP_1285"/>
</dbReference>
<dbReference type="GeneID" id="45653429"/>
<dbReference type="KEGG" id="spn:SP_1285"/>
<dbReference type="eggNOG" id="COG0357">
    <property type="taxonomic scope" value="Bacteria"/>
</dbReference>
<dbReference type="PhylomeDB" id="Q97QD4"/>
<dbReference type="BioCyc" id="SPNE170187:G1FZB-1298-MONOMER"/>
<dbReference type="Proteomes" id="UP000000585">
    <property type="component" value="Chromosome"/>
</dbReference>
<dbReference type="GO" id="GO:0005829">
    <property type="term" value="C:cytosol"/>
    <property type="evidence" value="ECO:0007669"/>
    <property type="project" value="TreeGrafter"/>
</dbReference>
<dbReference type="GO" id="GO:0070043">
    <property type="term" value="F:rRNA (guanine-N7-)-methyltransferase activity"/>
    <property type="evidence" value="ECO:0007669"/>
    <property type="project" value="UniProtKB-UniRule"/>
</dbReference>
<dbReference type="CDD" id="cd02440">
    <property type="entry name" value="AdoMet_MTases"/>
    <property type="match status" value="1"/>
</dbReference>
<dbReference type="FunFam" id="3.40.50.150:FF:000041">
    <property type="entry name" value="Ribosomal RNA small subunit methyltransferase G"/>
    <property type="match status" value="1"/>
</dbReference>
<dbReference type="Gene3D" id="3.40.50.150">
    <property type="entry name" value="Vaccinia Virus protein VP39"/>
    <property type="match status" value="1"/>
</dbReference>
<dbReference type="HAMAP" id="MF_00074">
    <property type="entry name" value="16SrRNA_methyltr_G"/>
    <property type="match status" value="1"/>
</dbReference>
<dbReference type="InterPro" id="IPR003682">
    <property type="entry name" value="rRNA_ssu_MeTfrase_G"/>
</dbReference>
<dbReference type="InterPro" id="IPR029063">
    <property type="entry name" value="SAM-dependent_MTases_sf"/>
</dbReference>
<dbReference type="NCBIfam" id="TIGR00138">
    <property type="entry name" value="rsmG_gidB"/>
    <property type="match status" value="1"/>
</dbReference>
<dbReference type="PANTHER" id="PTHR31760">
    <property type="entry name" value="S-ADENOSYL-L-METHIONINE-DEPENDENT METHYLTRANSFERASES SUPERFAMILY PROTEIN"/>
    <property type="match status" value="1"/>
</dbReference>
<dbReference type="PANTHER" id="PTHR31760:SF0">
    <property type="entry name" value="S-ADENOSYL-L-METHIONINE-DEPENDENT METHYLTRANSFERASES SUPERFAMILY PROTEIN"/>
    <property type="match status" value="1"/>
</dbReference>
<dbReference type="Pfam" id="PF02527">
    <property type="entry name" value="GidB"/>
    <property type="match status" value="1"/>
</dbReference>
<dbReference type="PIRSF" id="PIRSF003078">
    <property type="entry name" value="GidB"/>
    <property type="match status" value="1"/>
</dbReference>
<dbReference type="SUPFAM" id="SSF53335">
    <property type="entry name" value="S-adenosyl-L-methionine-dependent methyltransferases"/>
    <property type="match status" value="1"/>
</dbReference>
<evidence type="ECO:0000255" key="1">
    <source>
        <dbReference type="HAMAP-Rule" id="MF_00074"/>
    </source>
</evidence>
<evidence type="ECO:0000256" key="2">
    <source>
        <dbReference type="SAM" id="MobiDB-lite"/>
    </source>
</evidence>
<reference key="1">
    <citation type="journal article" date="2001" name="Science">
        <title>Complete genome sequence of a virulent isolate of Streptococcus pneumoniae.</title>
        <authorList>
            <person name="Tettelin H."/>
            <person name="Nelson K.E."/>
            <person name="Paulsen I.T."/>
            <person name="Eisen J.A."/>
            <person name="Read T.D."/>
            <person name="Peterson S.N."/>
            <person name="Heidelberg J.F."/>
            <person name="DeBoy R.T."/>
            <person name="Haft D.H."/>
            <person name="Dodson R.J."/>
            <person name="Durkin A.S."/>
            <person name="Gwinn M.L."/>
            <person name="Kolonay J.F."/>
            <person name="Nelson W.C."/>
            <person name="Peterson J.D."/>
            <person name="Umayam L.A."/>
            <person name="White O."/>
            <person name="Salzberg S.L."/>
            <person name="Lewis M.R."/>
            <person name="Radune D."/>
            <person name="Holtzapple E.K."/>
            <person name="Khouri H.M."/>
            <person name="Wolf A.M."/>
            <person name="Utterback T.R."/>
            <person name="Hansen C.L."/>
            <person name="McDonald L.A."/>
            <person name="Feldblyum T.V."/>
            <person name="Angiuoli S.V."/>
            <person name="Dickinson T."/>
            <person name="Hickey E.K."/>
            <person name="Holt I.E."/>
            <person name="Loftus B.J."/>
            <person name="Yang F."/>
            <person name="Smith H.O."/>
            <person name="Venter J.C."/>
            <person name="Dougherty B.A."/>
            <person name="Morrison D.A."/>
            <person name="Hollingshead S.K."/>
            <person name="Fraser C.M."/>
        </authorList>
    </citation>
    <scope>NUCLEOTIDE SEQUENCE [LARGE SCALE GENOMIC DNA]</scope>
    <source>
        <strain>ATCC BAA-334 / TIGR4</strain>
    </source>
</reference>
<sequence length="237" mass="27198">MKPKTFYNLLAEQNLPLSDQQKEQFERYFELLVEWNEKINLTAITDKEEVYLKHFYDSIAPILQGLIPNETIKLLDIGAGAGFPSLPMKILYPELDVTIIDSLNKRINFLQLLAQELDLNGVHFYHGRAEDFAQDKNFRAQYDFVTARAVARMQVLSELTIPYLKVGGKLLALKASNAPEELLEAKNALNLLFSKVEDNLSYALPNRDPRYITVVEKKKETPNKYPRKAGMPNKRPL</sequence>
<name>RSMG_STRPN</name>
<feature type="chain" id="PRO_0000184340" description="Ribosomal RNA small subunit methyltransferase G">
    <location>
        <begin position="1"/>
        <end position="237"/>
    </location>
</feature>
<feature type="region of interest" description="Disordered" evidence="2">
    <location>
        <begin position="218"/>
        <end position="237"/>
    </location>
</feature>
<feature type="binding site" evidence="1">
    <location>
        <position position="78"/>
    </location>
    <ligand>
        <name>S-adenosyl-L-methionine</name>
        <dbReference type="ChEBI" id="CHEBI:59789"/>
    </ligand>
</feature>
<feature type="binding site" evidence="1">
    <location>
        <position position="83"/>
    </location>
    <ligand>
        <name>S-adenosyl-L-methionine</name>
        <dbReference type="ChEBI" id="CHEBI:59789"/>
    </ligand>
</feature>
<feature type="binding site" evidence="1">
    <location>
        <begin position="129"/>
        <end position="130"/>
    </location>
    <ligand>
        <name>S-adenosyl-L-methionine</name>
        <dbReference type="ChEBI" id="CHEBI:59789"/>
    </ligand>
</feature>
<feature type="binding site" evidence="1">
    <location>
        <position position="148"/>
    </location>
    <ligand>
        <name>S-adenosyl-L-methionine</name>
        <dbReference type="ChEBI" id="CHEBI:59789"/>
    </ligand>
</feature>
<keyword id="KW-0963">Cytoplasm</keyword>
<keyword id="KW-0489">Methyltransferase</keyword>
<keyword id="KW-1185">Reference proteome</keyword>
<keyword id="KW-0698">rRNA processing</keyword>
<keyword id="KW-0949">S-adenosyl-L-methionine</keyword>
<keyword id="KW-0808">Transferase</keyword>
<comment type="function">
    <text evidence="1">Specifically methylates the N7 position of a guanine in 16S rRNA.</text>
</comment>
<comment type="interaction">
    <interactant intactId="EBI-6473679">
        <id>Q97QD4</id>
    </interactant>
    <interactant intactId="EBI-6473683">
        <id>A0A0H2URP5</id>
        <label>SP_1879</label>
    </interactant>
    <organismsDiffer>false</organismsDiffer>
    <experiments>4</experiments>
</comment>
<comment type="subcellular location">
    <subcellularLocation>
        <location evidence="1">Cytoplasm</location>
    </subcellularLocation>
</comment>
<comment type="similarity">
    <text evidence="1">Belongs to the methyltransferase superfamily. RNA methyltransferase RsmG family.</text>
</comment>
<organism>
    <name type="scientific">Streptococcus pneumoniae serotype 4 (strain ATCC BAA-334 / TIGR4)</name>
    <dbReference type="NCBI Taxonomy" id="170187"/>
    <lineage>
        <taxon>Bacteria</taxon>
        <taxon>Bacillati</taxon>
        <taxon>Bacillota</taxon>
        <taxon>Bacilli</taxon>
        <taxon>Lactobacillales</taxon>
        <taxon>Streptococcaceae</taxon>
        <taxon>Streptococcus</taxon>
    </lineage>
</organism>
<protein>
    <recommendedName>
        <fullName evidence="1">Ribosomal RNA small subunit methyltransferase G</fullName>
        <ecNumber evidence="1">2.1.1.-</ecNumber>
    </recommendedName>
    <alternativeName>
        <fullName evidence="1">16S rRNA 7-methylguanosine methyltransferase</fullName>
        <shortName evidence="1">16S rRNA m7G methyltransferase</shortName>
    </alternativeName>
</protein>
<proteinExistence type="evidence at protein level"/>
<accession>Q97QD4</accession>
<gene>
    <name evidence="1" type="primary">rsmG</name>
    <name type="ordered locus">SP_1285</name>
</gene>